<proteinExistence type="inferred from homology"/>
<feature type="chain" id="PRO_0000374635" description="tRNA-2-methylthio-N(6)-dimethylallyladenosine synthase">
    <location>
        <begin position="1"/>
        <end position="474"/>
    </location>
</feature>
<feature type="domain" description="MTTase N-terminal" evidence="1">
    <location>
        <begin position="3"/>
        <end position="120"/>
    </location>
</feature>
<feature type="domain" description="Radical SAM core" evidence="2">
    <location>
        <begin position="143"/>
        <end position="375"/>
    </location>
</feature>
<feature type="domain" description="TRAM" evidence="1">
    <location>
        <begin position="378"/>
        <end position="441"/>
    </location>
</feature>
<feature type="binding site" evidence="1">
    <location>
        <position position="12"/>
    </location>
    <ligand>
        <name>[4Fe-4S] cluster</name>
        <dbReference type="ChEBI" id="CHEBI:49883"/>
        <label>1</label>
    </ligand>
</feature>
<feature type="binding site" evidence="1">
    <location>
        <position position="49"/>
    </location>
    <ligand>
        <name>[4Fe-4S] cluster</name>
        <dbReference type="ChEBI" id="CHEBI:49883"/>
        <label>1</label>
    </ligand>
</feature>
<feature type="binding site" evidence="1">
    <location>
        <position position="83"/>
    </location>
    <ligand>
        <name>[4Fe-4S] cluster</name>
        <dbReference type="ChEBI" id="CHEBI:49883"/>
        <label>1</label>
    </ligand>
</feature>
<feature type="binding site" evidence="1">
    <location>
        <position position="157"/>
    </location>
    <ligand>
        <name>[4Fe-4S] cluster</name>
        <dbReference type="ChEBI" id="CHEBI:49883"/>
        <label>2</label>
        <note>4Fe-4S-S-AdoMet</note>
    </ligand>
</feature>
<feature type="binding site" evidence="1">
    <location>
        <position position="161"/>
    </location>
    <ligand>
        <name>[4Fe-4S] cluster</name>
        <dbReference type="ChEBI" id="CHEBI:49883"/>
        <label>2</label>
        <note>4Fe-4S-S-AdoMet</note>
    </ligand>
</feature>
<feature type="binding site" evidence="1">
    <location>
        <position position="164"/>
    </location>
    <ligand>
        <name>[4Fe-4S] cluster</name>
        <dbReference type="ChEBI" id="CHEBI:49883"/>
        <label>2</label>
        <note>4Fe-4S-S-AdoMet</note>
    </ligand>
</feature>
<evidence type="ECO:0000255" key="1">
    <source>
        <dbReference type="HAMAP-Rule" id="MF_01864"/>
    </source>
</evidence>
<evidence type="ECO:0000255" key="2">
    <source>
        <dbReference type="PROSITE-ProRule" id="PRU01266"/>
    </source>
</evidence>
<keyword id="KW-0004">4Fe-4S</keyword>
<keyword id="KW-0963">Cytoplasm</keyword>
<keyword id="KW-0408">Iron</keyword>
<keyword id="KW-0411">Iron-sulfur</keyword>
<keyword id="KW-0479">Metal-binding</keyword>
<keyword id="KW-0949">S-adenosyl-L-methionine</keyword>
<keyword id="KW-0808">Transferase</keyword>
<keyword id="KW-0819">tRNA processing</keyword>
<protein>
    <recommendedName>
        <fullName evidence="1">tRNA-2-methylthio-N(6)-dimethylallyladenosine synthase</fullName>
        <ecNumber evidence="1">2.8.4.3</ecNumber>
    </recommendedName>
    <alternativeName>
        <fullName evidence="1">(Dimethylallyl)adenosine tRNA methylthiotransferase MiaB</fullName>
    </alternativeName>
    <alternativeName>
        <fullName evidence="1">tRNA-i(6)A37 methylthiotransferase</fullName>
    </alternativeName>
</protein>
<name>MIAB_VIBVU</name>
<dbReference type="EC" id="2.8.4.3" evidence="1"/>
<dbReference type="EMBL" id="AE016795">
    <property type="protein sequence ID" value="AAO08800.1"/>
    <property type="molecule type" value="Genomic_DNA"/>
</dbReference>
<dbReference type="RefSeq" id="WP_011078375.1">
    <property type="nucleotide sequence ID" value="NC_004459.3"/>
</dbReference>
<dbReference type="SMR" id="Q8DFE8"/>
<dbReference type="KEGG" id="vvu:VV1_0266"/>
<dbReference type="HOGENOM" id="CLU_018697_2_0_6"/>
<dbReference type="Proteomes" id="UP000002275">
    <property type="component" value="Chromosome 1"/>
</dbReference>
<dbReference type="GO" id="GO:0005829">
    <property type="term" value="C:cytosol"/>
    <property type="evidence" value="ECO:0007669"/>
    <property type="project" value="TreeGrafter"/>
</dbReference>
<dbReference type="GO" id="GO:0051539">
    <property type="term" value="F:4 iron, 4 sulfur cluster binding"/>
    <property type="evidence" value="ECO:0007669"/>
    <property type="project" value="UniProtKB-UniRule"/>
</dbReference>
<dbReference type="GO" id="GO:0046872">
    <property type="term" value="F:metal ion binding"/>
    <property type="evidence" value="ECO:0007669"/>
    <property type="project" value="UniProtKB-KW"/>
</dbReference>
<dbReference type="GO" id="GO:0035597">
    <property type="term" value="F:N6-isopentenyladenosine methylthiotransferase activity"/>
    <property type="evidence" value="ECO:0007669"/>
    <property type="project" value="TreeGrafter"/>
</dbReference>
<dbReference type="CDD" id="cd01335">
    <property type="entry name" value="Radical_SAM"/>
    <property type="match status" value="1"/>
</dbReference>
<dbReference type="FunFam" id="3.40.50.12160:FF:000001">
    <property type="entry name" value="tRNA-2-methylthio-N(6)-dimethylallyladenosine synthase"/>
    <property type="match status" value="1"/>
</dbReference>
<dbReference type="FunFam" id="3.80.30.20:FF:000001">
    <property type="entry name" value="tRNA-2-methylthio-N(6)-dimethylallyladenosine synthase 2"/>
    <property type="match status" value="1"/>
</dbReference>
<dbReference type="Gene3D" id="3.40.50.12160">
    <property type="entry name" value="Methylthiotransferase, N-terminal domain"/>
    <property type="match status" value="1"/>
</dbReference>
<dbReference type="Gene3D" id="3.80.30.20">
    <property type="entry name" value="tm_1862 like domain"/>
    <property type="match status" value="1"/>
</dbReference>
<dbReference type="HAMAP" id="MF_01864">
    <property type="entry name" value="tRNA_metthiotr_MiaB"/>
    <property type="match status" value="1"/>
</dbReference>
<dbReference type="InterPro" id="IPR006638">
    <property type="entry name" value="Elp3/MiaA/NifB-like_rSAM"/>
</dbReference>
<dbReference type="InterPro" id="IPR005839">
    <property type="entry name" value="Methylthiotransferase"/>
</dbReference>
<dbReference type="InterPro" id="IPR020612">
    <property type="entry name" value="Methylthiotransferase_CS"/>
</dbReference>
<dbReference type="InterPro" id="IPR013848">
    <property type="entry name" value="Methylthiotransferase_N"/>
</dbReference>
<dbReference type="InterPro" id="IPR038135">
    <property type="entry name" value="Methylthiotransferase_N_sf"/>
</dbReference>
<dbReference type="InterPro" id="IPR006463">
    <property type="entry name" value="MiaB_methiolase"/>
</dbReference>
<dbReference type="InterPro" id="IPR007197">
    <property type="entry name" value="rSAM"/>
</dbReference>
<dbReference type="InterPro" id="IPR023404">
    <property type="entry name" value="rSAM_horseshoe"/>
</dbReference>
<dbReference type="InterPro" id="IPR002792">
    <property type="entry name" value="TRAM_dom"/>
</dbReference>
<dbReference type="NCBIfam" id="TIGR01574">
    <property type="entry name" value="miaB-methiolase"/>
    <property type="match status" value="1"/>
</dbReference>
<dbReference type="NCBIfam" id="TIGR00089">
    <property type="entry name" value="MiaB/RimO family radical SAM methylthiotransferase"/>
    <property type="match status" value="1"/>
</dbReference>
<dbReference type="PANTHER" id="PTHR43020">
    <property type="entry name" value="CDK5 REGULATORY SUBUNIT-ASSOCIATED PROTEIN 1"/>
    <property type="match status" value="1"/>
</dbReference>
<dbReference type="PANTHER" id="PTHR43020:SF2">
    <property type="entry name" value="MITOCHONDRIAL TRNA METHYLTHIOTRANSFERASE CDK5RAP1"/>
    <property type="match status" value="1"/>
</dbReference>
<dbReference type="Pfam" id="PF04055">
    <property type="entry name" value="Radical_SAM"/>
    <property type="match status" value="1"/>
</dbReference>
<dbReference type="Pfam" id="PF01938">
    <property type="entry name" value="TRAM"/>
    <property type="match status" value="1"/>
</dbReference>
<dbReference type="Pfam" id="PF00919">
    <property type="entry name" value="UPF0004"/>
    <property type="match status" value="1"/>
</dbReference>
<dbReference type="SFLD" id="SFLDF00273">
    <property type="entry name" value="(dimethylallyl)adenosine_tRNA"/>
    <property type="match status" value="1"/>
</dbReference>
<dbReference type="SFLD" id="SFLDG01082">
    <property type="entry name" value="B12-binding_domain_containing"/>
    <property type="match status" value="1"/>
</dbReference>
<dbReference type="SFLD" id="SFLDG01061">
    <property type="entry name" value="methylthiotransferase"/>
    <property type="match status" value="1"/>
</dbReference>
<dbReference type="SMART" id="SM00729">
    <property type="entry name" value="Elp3"/>
    <property type="match status" value="1"/>
</dbReference>
<dbReference type="SUPFAM" id="SSF102114">
    <property type="entry name" value="Radical SAM enzymes"/>
    <property type="match status" value="1"/>
</dbReference>
<dbReference type="PROSITE" id="PS51449">
    <property type="entry name" value="MTTASE_N"/>
    <property type="match status" value="1"/>
</dbReference>
<dbReference type="PROSITE" id="PS01278">
    <property type="entry name" value="MTTASE_RADICAL"/>
    <property type="match status" value="1"/>
</dbReference>
<dbReference type="PROSITE" id="PS51918">
    <property type="entry name" value="RADICAL_SAM"/>
    <property type="match status" value="1"/>
</dbReference>
<dbReference type="PROSITE" id="PS50926">
    <property type="entry name" value="TRAM"/>
    <property type="match status" value="1"/>
</dbReference>
<comment type="function">
    <text evidence="1">Catalyzes the methylthiolation of N6-(dimethylallyl)adenosine (i(6)A), leading to the formation of 2-methylthio-N6-(dimethylallyl)adenosine (ms(2)i(6)A) at position 37 in tRNAs that read codons beginning with uridine.</text>
</comment>
<comment type="catalytic activity">
    <reaction evidence="1">
        <text>N(6)-dimethylallyladenosine(37) in tRNA + (sulfur carrier)-SH + AH2 + 2 S-adenosyl-L-methionine = 2-methylsulfanyl-N(6)-dimethylallyladenosine(37) in tRNA + (sulfur carrier)-H + 5'-deoxyadenosine + L-methionine + A + S-adenosyl-L-homocysteine + 2 H(+)</text>
        <dbReference type="Rhea" id="RHEA:37067"/>
        <dbReference type="Rhea" id="RHEA-COMP:10375"/>
        <dbReference type="Rhea" id="RHEA-COMP:10376"/>
        <dbReference type="Rhea" id="RHEA-COMP:14737"/>
        <dbReference type="Rhea" id="RHEA-COMP:14739"/>
        <dbReference type="ChEBI" id="CHEBI:13193"/>
        <dbReference type="ChEBI" id="CHEBI:15378"/>
        <dbReference type="ChEBI" id="CHEBI:17319"/>
        <dbReference type="ChEBI" id="CHEBI:17499"/>
        <dbReference type="ChEBI" id="CHEBI:29917"/>
        <dbReference type="ChEBI" id="CHEBI:57844"/>
        <dbReference type="ChEBI" id="CHEBI:57856"/>
        <dbReference type="ChEBI" id="CHEBI:59789"/>
        <dbReference type="ChEBI" id="CHEBI:64428"/>
        <dbReference type="ChEBI" id="CHEBI:74415"/>
        <dbReference type="ChEBI" id="CHEBI:74417"/>
        <dbReference type="EC" id="2.8.4.3"/>
    </reaction>
</comment>
<comment type="cofactor">
    <cofactor evidence="1">
        <name>[4Fe-4S] cluster</name>
        <dbReference type="ChEBI" id="CHEBI:49883"/>
    </cofactor>
    <text evidence="1">Binds 2 [4Fe-4S] clusters. One cluster is coordinated with 3 cysteines and an exchangeable S-adenosyl-L-methionine.</text>
</comment>
<comment type="subunit">
    <text evidence="1">Monomer.</text>
</comment>
<comment type="subcellular location">
    <subcellularLocation>
        <location evidence="1">Cytoplasm</location>
    </subcellularLocation>
</comment>
<comment type="similarity">
    <text evidence="1">Belongs to the methylthiotransferase family. MiaB subfamily.</text>
</comment>
<organism>
    <name type="scientific">Vibrio vulnificus (strain CMCP6)</name>
    <dbReference type="NCBI Taxonomy" id="216895"/>
    <lineage>
        <taxon>Bacteria</taxon>
        <taxon>Pseudomonadati</taxon>
        <taxon>Pseudomonadota</taxon>
        <taxon>Gammaproteobacteria</taxon>
        <taxon>Vibrionales</taxon>
        <taxon>Vibrionaceae</taxon>
        <taxon>Vibrio</taxon>
    </lineage>
</organism>
<gene>
    <name evidence="1" type="primary">miaB</name>
    <name type="ordered locus">VV1_0266</name>
</gene>
<reference key="1">
    <citation type="submission" date="2002-12" db="EMBL/GenBank/DDBJ databases">
        <title>Complete genome sequence of Vibrio vulnificus CMCP6.</title>
        <authorList>
            <person name="Rhee J.H."/>
            <person name="Kim S.Y."/>
            <person name="Chung S.S."/>
            <person name="Kim J.J."/>
            <person name="Moon Y.H."/>
            <person name="Jeong H."/>
            <person name="Choy H.E."/>
        </authorList>
    </citation>
    <scope>NUCLEOTIDE SEQUENCE [LARGE SCALE GENOMIC DNA]</scope>
    <source>
        <strain>CMCP6</strain>
    </source>
</reference>
<sequence length="474" mass="53592">MSKKLLIKTWGCQMNEYDSSKMADLLNAANGYELTEEPEEADVLLLNTCSIREKAQEKVFHQLGRWKTLKDKKPGVVIGVGGCVATQEGDHIRERAPFVDVIFGPQTLHRLPEMIKQSQSEDAPVMDISFPEIEKFDSLPEPRAEGATAFVSIMEGCSKYCTYCVVPYTRGEEVSRPMDDVLYEIAQLAEQGVREVNLLGQNVNAYRGPTHDGEICSFAELLRLVASIDGIDRIRFTTSHPLEFTDDIIAVYEDTPELVSFLHLPVQSGSDRILTMMKRPHTGIEYKSIIRKLRKARPDIQISSDFIVGFPGESDKDFQDTMKLIKDVDFDMSFSFIFSPRPGTPAADYPCDLSEETKKERLYELQQQINAQAMRYSRLMLGTEQRVLVEGPSKKNLMELRARTENNRVVNFEGSADLIGQFVDVKITDVFANSLRGEIVRTEKDMDLRSVISPTQMMAKTRREDELGVATFTP</sequence>
<accession>Q8DFE8</accession>